<reference key="1">
    <citation type="journal article" date="1997" name="Nature">
        <title>The complete genome sequence of the hyperthermophilic, sulphate-reducing archaeon Archaeoglobus fulgidus.</title>
        <authorList>
            <person name="Klenk H.-P."/>
            <person name="Clayton R.A."/>
            <person name="Tomb J.-F."/>
            <person name="White O."/>
            <person name="Nelson K.E."/>
            <person name="Ketchum K.A."/>
            <person name="Dodson R.J."/>
            <person name="Gwinn M.L."/>
            <person name="Hickey E.K."/>
            <person name="Peterson J.D."/>
            <person name="Richardson D.L."/>
            <person name="Kerlavage A.R."/>
            <person name="Graham D.E."/>
            <person name="Kyrpides N.C."/>
            <person name="Fleischmann R.D."/>
            <person name="Quackenbush J."/>
            <person name="Lee N.H."/>
            <person name="Sutton G.G."/>
            <person name="Gill S.R."/>
            <person name="Kirkness E.F."/>
            <person name="Dougherty B.A."/>
            <person name="McKenney K."/>
            <person name="Adams M.D."/>
            <person name="Loftus B.J."/>
            <person name="Peterson S.N."/>
            <person name="Reich C.I."/>
            <person name="McNeil L.K."/>
            <person name="Badger J.H."/>
            <person name="Glodek A."/>
            <person name="Zhou L."/>
            <person name="Overbeek R."/>
            <person name="Gocayne J.D."/>
            <person name="Weidman J.F."/>
            <person name="McDonald L.A."/>
            <person name="Utterback T.R."/>
            <person name="Cotton M.D."/>
            <person name="Spriggs T."/>
            <person name="Artiach P."/>
            <person name="Kaine B.P."/>
            <person name="Sykes S.M."/>
            <person name="Sadow P.W."/>
            <person name="D'Andrea K.P."/>
            <person name="Bowman C."/>
            <person name="Fujii C."/>
            <person name="Garland S.A."/>
            <person name="Mason T.M."/>
            <person name="Olsen G.J."/>
            <person name="Fraser C.M."/>
            <person name="Smith H.O."/>
            <person name="Woese C.R."/>
            <person name="Venter J.C."/>
        </authorList>
    </citation>
    <scope>NUCLEOTIDE SEQUENCE [LARGE SCALE GENOMIC DNA]</scope>
    <source>
        <strain>ATCC 49558 / DSM 4304 / JCM 9628 / NBRC 100126 / VC-16</strain>
    </source>
</reference>
<evidence type="ECO:0000255" key="1">
    <source>
        <dbReference type="HAMAP-Rule" id="MF_01225"/>
    </source>
</evidence>
<evidence type="ECO:0000255" key="2">
    <source>
        <dbReference type="PROSITE-ProRule" id="PRU01266"/>
    </source>
</evidence>
<keyword id="KW-0004">4Fe-4S</keyword>
<keyword id="KW-0342">GTP-binding</keyword>
<keyword id="KW-0408">Iron</keyword>
<keyword id="KW-0411">Iron-sulfur</keyword>
<keyword id="KW-0456">Lyase</keyword>
<keyword id="KW-0479">Metal-binding</keyword>
<keyword id="KW-0501">Molybdenum cofactor biosynthesis</keyword>
<keyword id="KW-0547">Nucleotide-binding</keyword>
<keyword id="KW-1185">Reference proteome</keyword>
<keyword id="KW-0949">S-adenosyl-L-methionine</keyword>
<accession>O28273</accession>
<proteinExistence type="inferred from homology"/>
<protein>
    <recommendedName>
        <fullName evidence="1">Probable GTP 3',8-cyclase</fullName>
        <ecNumber evidence="1">4.1.99.22</ecNumber>
    </recommendedName>
    <alternativeName>
        <fullName evidence="1">Molybdenum cofactor biosynthesis protein A</fullName>
    </alternativeName>
</protein>
<sequence length="296" mass="33800">MLKDEYGRVVTNLRIAVTKKCNLRCFYCHKEGESNPGEEISAERIVEIARAFKELGVRKLKITGGEPLLRKDLPDIILNLPEFEEISMTTNGILLEKYAEELRECGLSRVNVSLDTLDAEKYRWITGGGEVQKVVNGIEKACEVGLTPVKINMLVLGGVNDNEVDELLEFTNSFNRGNTKAILQVIELVPFPGFEKYFFDISTIEEKYARMATQRRVRAMHRRTQYFTPKGVIEFVKPMDNTAFCMHCNRMRVTSDGKLKPCLLRNETITIDGKHGEELARAIIETVRKREPYFKG</sequence>
<comment type="function">
    <text evidence="1">Catalyzes the cyclization of GTP to (8S)-3',8-cyclo-7,8-dihydroguanosine 5'-triphosphate.</text>
</comment>
<comment type="catalytic activity">
    <reaction evidence="1">
        <text>GTP + AH2 + S-adenosyl-L-methionine = (8S)-3',8-cyclo-7,8-dihydroguanosine 5'-triphosphate + 5'-deoxyadenosine + L-methionine + A + H(+)</text>
        <dbReference type="Rhea" id="RHEA:49576"/>
        <dbReference type="ChEBI" id="CHEBI:13193"/>
        <dbReference type="ChEBI" id="CHEBI:15378"/>
        <dbReference type="ChEBI" id="CHEBI:17319"/>
        <dbReference type="ChEBI" id="CHEBI:17499"/>
        <dbReference type="ChEBI" id="CHEBI:37565"/>
        <dbReference type="ChEBI" id="CHEBI:57844"/>
        <dbReference type="ChEBI" id="CHEBI:59789"/>
        <dbReference type="ChEBI" id="CHEBI:131766"/>
        <dbReference type="EC" id="4.1.99.22"/>
    </reaction>
</comment>
<comment type="cofactor">
    <cofactor evidence="1">
        <name>[4Fe-4S] cluster</name>
        <dbReference type="ChEBI" id="CHEBI:49883"/>
    </cofactor>
    <text evidence="1">Binds 2 [4Fe-4S] clusters. Binds 1 [4Fe-4S] cluster coordinated with 3 cysteines and an exchangeable S-adenosyl-L-methionine and 1 [4Fe-4S] cluster coordinated with 3 cysteines and the GTP-derived substrate.</text>
</comment>
<comment type="pathway">
    <text evidence="1">Cofactor biosynthesis; molybdopterin biosynthesis.</text>
</comment>
<comment type="similarity">
    <text evidence="1">Belongs to the radical SAM superfamily. MoaA family.</text>
</comment>
<feature type="chain" id="PRO_0000153014" description="Probable GTP 3',8-cyclase">
    <location>
        <begin position="1"/>
        <end position="296"/>
    </location>
</feature>
<feature type="domain" description="Radical SAM core" evidence="2">
    <location>
        <begin position="5"/>
        <end position="230"/>
    </location>
</feature>
<feature type="binding site" evidence="1">
    <location>
        <position position="14"/>
    </location>
    <ligand>
        <name>GTP</name>
        <dbReference type="ChEBI" id="CHEBI:37565"/>
    </ligand>
</feature>
<feature type="binding site" evidence="1">
    <location>
        <position position="21"/>
    </location>
    <ligand>
        <name>[4Fe-4S] cluster</name>
        <dbReference type="ChEBI" id="CHEBI:49883"/>
        <label>1</label>
        <note>4Fe-4S-S-AdoMet</note>
    </ligand>
</feature>
<feature type="binding site" evidence="1">
    <location>
        <position position="25"/>
    </location>
    <ligand>
        <name>[4Fe-4S] cluster</name>
        <dbReference type="ChEBI" id="CHEBI:49883"/>
        <label>1</label>
        <note>4Fe-4S-S-AdoMet</note>
    </ligand>
</feature>
<feature type="binding site" evidence="1">
    <location>
        <position position="27"/>
    </location>
    <ligand>
        <name>S-adenosyl-L-methionine</name>
        <dbReference type="ChEBI" id="CHEBI:59789"/>
    </ligand>
</feature>
<feature type="binding site" evidence="1">
    <location>
        <position position="28"/>
    </location>
    <ligand>
        <name>[4Fe-4S] cluster</name>
        <dbReference type="ChEBI" id="CHEBI:49883"/>
        <label>1</label>
        <note>4Fe-4S-S-AdoMet</note>
    </ligand>
</feature>
<feature type="binding site" evidence="1">
    <location>
        <position position="61"/>
    </location>
    <ligand>
        <name>GTP</name>
        <dbReference type="ChEBI" id="CHEBI:37565"/>
    </ligand>
</feature>
<feature type="binding site" evidence="1">
    <location>
        <position position="65"/>
    </location>
    <ligand>
        <name>S-adenosyl-L-methionine</name>
        <dbReference type="ChEBI" id="CHEBI:59789"/>
    </ligand>
</feature>
<feature type="binding site" evidence="1">
    <location>
        <position position="89"/>
    </location>
    <ligand>
        <name>GTP</name>
        <dbReference type="ChEBI" id="CHEBI:37565"/>
    </ligand>
</feature>
<feature type="binding site" evidence="1">
    <location>
        <position position="113"/>
    </location>
    <ligand>
        <name>S-adenosyl-L-methionine</name>
        <dbReference type="ChEBI" id="CHEBI:59789"/>
    </ligand>
</feature>
<feature type="binding site" evidence="1">
    <location>
        <position position="150"/>
    </location>
    <ligand>
        <name>GTP</name>
        <dbReference type="ChEBI" id="CHEBI:37565"/>
    </ligand>
</feature>
<feature type="binding site" evidence="1">
    <location>
        <position position="245"/>
    </location>
    <ligand>
        <name>[4Fe-4S] cluster</name>
        <dbReference type="ChEBI" id="CHEBI:49883"/>
        <label>2</label>
        <note>4Fe-4S-substrate</note>
    </ligand>
</feature>
<feature type="binding site" evidence="1">
    <location>
        <position position="248"/>
    </location>
    <ligand>
        <name>[4Fe-4S] cluster</name>
        <dbReference type="ChEBI" id="CHEBI:49883"/>
        <label>2</label>
        <note>4Fe-4S-substrate</note>
    </ligand>
</feature>
<feature type="binding site" evidence="1">
    <location>
        <begin position="250"/>
        <end position="252"/>
    </location>
    <ligand>
        <name>GTP</name>
        <dbReference type="ChEBI" id="CHEBI:37565"/>
    </ligand>
</feature>
<feature type="binding site" evidence="1">
    <location>
        <position position="262"/>
    </location>
    <ligand>
        <name>[4Fe-4S] cluster</name>
        <dbReference type="ChEBI" id="CHEBI:49883"/>
        <label>2</label>
        <note>4Fe-4S-substrate</note>
    </ligand>
</feature>
<gene>
    <name evidence="1" type="primary">moaA</name>
    <name type="ordered locus">AF_2006</name>
</gene>
<name>MOAA_ARCFU</name>
<dbReference type="EC" id="4.1.99.22" evidence="1"/>
<dbReference type="EMBL" id="AE000782">
    <property type="protein sequence ID" value="AAB89248.1"/>
    <property type="molecule type" value="Genomic_DNA"/>
</dbReference>
<dbReference type="PIR" id="E69500">
    <property type="entry name" value="E69500"/>
</dbReference>
<dbReference type="RefSeq" id="WP_010879498.1">
    <property type="nucleotide sequence ID" value="NC_000917.1"/>
</dbReference>
<dbReference type="SMR" id="O28273"/>
<dbReference type="STRING" id="224325.AF_2006"/>
<dbReference type="PaxDb" id="224325-AF_2006"/>
<dbReference type="EnsemblBacteria" id="AAB89248">
    <property type="protein sequence ID" value="AAB89248"/>
    <property type="gene ID" value="AF_2006"/>
</dbReference>
<dbReference type="GeneID" id="1485231"/>
<dbReference type="KEGG" id="afu:AF_2006"/>
<dbReference type="eggNOG" id="arCOG00930">
    <property type="taxonomic scope" value="Archaea"/>
</dbReference>
<dbReference type="HOGENOM" id="CLU_009273_0_1_2"/>
<dbReference type="OrthoDB" id="6925at2157"/>
<dbReference type="PhylomeDB" id="O28273"/>
<dbReference type="UniPathway" id="UPA00344"/>
<dbReference type="Proteomes" id="UP000002199">
    <property type="component" value="Chromosome"/>
</dbReference>
<dbReference type="GO" id="GO:0051539">
    <property type="term" value="F:4 iron, 4 sulfur cluster binding"/>
    <property type="evidence" value="ECO:0007669"/>
    <property type="project" value="UniProtKB-UniRule"/>
</dbReference>
<dbReference type="GO" id="GO:0061799">
    <property type="term" value="F:cyclic pyranopterin monophosphate synthase activity"/>
    <property type="evidence" value="ECO:0007669"/>
    <property type="project" value="TreeGrafter"/>
</dbReference>
<dbReference type="GO" id="GO:0061798">
    <property type="term" value="F:GTP 3',8'-cyclase activity"/>
    <property type="evidence" value="ECO:0007669"/>
    <property type="project" value="UniProtKB-UniRule"/>
</dbReference>
<dbReference type="GO" id="GO:0005525">
    <property type="term" value="F:GTP binding"/>
    <property type="evidence" value="ECO:0007669"/>
    <property type="project" value="UniProtKB-UniRule"/>
</dbReference>
<dbReference type="GO" id="GO:0046872">
    <property type="term" value="F:metal ion binding"/>
    <property type="evidence" value="ECO:0007669"/>
    <property type="project" value="UniProtKB-KW"/>
</dbReference>
<dbReference type="GO" id="GO:1904047">
    <property type="term" value="F:S-adenosyl-L-methionine binding"/>
    <property type="evidence" value="ECO:0007669"/>
    <property type="project" value="UniProtKB-UniRule"/>
</dbReference>
<dbReference type="GO" id="GO:0006777">
    <property type="term" value="P:Mo-molybdopterin cofactor biosynthetic process"/>
    <property type="evidence" value="ECO:0007669"/>
    <property type="project" value="UniProtKB-UniRule"/>
</dbReference>
<dbReference type="CDD" id="cd01335">
    <property type="entry name" value="Radical_SAM"/>
    <property type="match status" value="1"/>
</dbReference>
<dbReference type="CDD" id="cd21117">
    <property type="entry name" value="Twitch_MoaA"/>
    <property type="match status" value="1"/>
</dbReference>
<dbReference type="Gene3D" id="3.20.20.70">
    <property type="entry name" value="Aldolase class I"/>
    <property type="match status" value="1"/>
</dbReference>
<dbReference type="HAMAP" id="MF_01225_A">
    <property type="entry name" value="MoaA_A"/>
    <property type="match status" value="1"/>
</dbReference>
<dbReference type="InterPro" id="IPR013785">
    <property type="entry name" value="Aldolase_TIM"/>
</dbReference>
<dbReference type="InterPro" id="IPR006638">
    <property type="entry name" value="Elp3/MiaA/NifB-like_rSAM"/>
</dbReference>
<dbReference type="InterPro" id="IPR013485">
    <property type="entry name" value="MoaA_arc"/>
</dbReference>
<dbReference type="InterPro" id="IPR000385">
    <property type="entry name" value="MoaA_NifB_PqqE_Fe-S-bd_CS"/>
</dbReference>
<dbReference type="InterPro" id="IPR010505">
    <property type="entry name" value="MoaA_twitch"/>
</dbReference>
<dbReference type="InterPro" id="IPR050105">
    <property type="entry name" value="MoCo_biosynth_MoaA/MoaC"/>
</dbReference>
<dbReference type="InterPro" id="IPR007197">
    <property type="entry name" value="rSAM"/>
</dbReference>
<dbReference type="NCBIfam" id="TIGR02668">
    <property type="entry name" value="moaA_archaeal"/>
    <property type="match status" value="1"/>
</dbReference>
<dbReference type="NCBIfam" id="NF001199">
    <property type="entry name" value="PRK00164.2-1"/>
    <property type="match status" value="1"/>
</dbReference>
<dbReference type="PANTHER" id="PTHR22960:SF0">
    <property type="entry name" value="MOLYBDENUM COFACTOR BIOSYNTHESIS PROTEIN 1"/>
    <property type="match status" value="1"/>
</dbReference>
<dbReference type="PANTHER" id="PTHR22960">
    <property type="entry name" value="MOLYBDOPTERIN COFACTOR SYNTHESIS PROTEIN A"/>
    <property type="match status" value="1"/>
</dbReference>
<dbReference type="Pfam" id="PF13353">
    <property type="entry name" value="Fer4_12"/>
    <property type="match status" value="1"/>
</dbReference>
<dbReference type="Pfam" id="PF06463">
    <property type="entry name" value="Mob_synth_C"/>
    <property type="match status" value="1"/>
</dbReference>
<dbReference type="Pfam" id="PF04055">
    <property type="entry name" value="Radical_SAM"/>
    <property type="match status" value="1"/>
</dbReference>
<dbReference type="SFLD" id="SFLDG01383">
    <property type="entry name" value="cyclic_pyranopterin_phosphate"/>
    <property type="match status" value="1"/>
</dbReference>
<dbReference type="SFLD" id="SFLDG01386">
    <property type="entry name" value="main_SPASM_domain-containing"/>
    <property type="match status" value="1"/>
</dbReference>
<dbReference type="SMART" id="SM00729">
    <property type="entry name" value="Elp3"/>
    <property type="match status" value="1"/>
</dbReference>
<dbReference type="SUPFAM" id="SSF102114">
    <property type="entry name" value="Radical SAM enzymes"/>
    <property type="match status" value="1"/>
</dbReference>
<dbReference type="PROSITE" id="PS01305">
    <property type="entry name" value="MOAA_NIFB_PQQE"/>
    <property type="match status" value="1"/>
</dbReference>
<dbReference type="PROSITE" id="PS51918">
    <property type="entry name" value="RADICAL_SAM"/>
    <property type="match status" value="1"/>
</dbReference>
<organism>
    <name type="scientific">Archaeoglobus fulgidus (strain ATCC 49558 / DSM 4304 / JCM 9628 / NBRC 100126 / VC-16)</name>
    <dbReference type="NCBI Taxonomy" id="224325"/>
    <lineage>
        <taxon>Archaea</taxon>
        <taxon>Methanobacteriati</taxon>
        <taxon>Methanobacteriota</taxon>
        <taxon>Archaeoglobi</taxon>
        <taxon>Archaeoglobales</taxon>
        <taxon>Archaeoglobaceae</taxon>
        <taxon>Archaeoglobus</taxon>
    </lineage>
</organism>